<comment type="function">
    <text evidence="1">Catalyzes the reversible isomerization of glucose-6-phosphate to fructose-6-phosphate.</text>
</comment>
<comment type="catalytic activity">
    <reaction evidence="1">
        <text>alpha-D-glucose 6-phosphate = beta-D-fructose 6-phosphate</text>
        <dbReference type="Rhea" id="RHEA:11816"/>
        <dbReference type="ChEBI" id="CHEBI:57634"/>
        <dbReference type="ChEBI" id="CHEBI:58225"/>
        <dbReference type="EC" id="5.3.1.9"/>
    </reaction>
</comment>
<comment type="pathway">
    <text evidence="1">Carbohydrate biosynthesis; gluconeogenesis.</text>
</comment>
<comment type="pathway">
    <text evidence="1">Carbohydrate degradation; glycolysis; D-glyceraldehyde 3-phosphate and glycerone phosphate from D-glucose: step 2/4.</text>
</comment>
<comment type="subcellular location">
    <subcellularLocation>
        <location evidence="1">Cytoplasm</location>
    </subcellularLocation>
</comment>
<comment type="similarity">
    <text evidence="1">Belongs to the GPI family.</text>
</comment>
<accession>A4STE1</accession>
<proteinExistence type="inferred from homology"/>
<reference key="1">
    <citation type="journal article" date="2008" name="BMC Genomics">
        <title>The genome of Aeromonas salmonicida subsp. salmonicida A449: insights into the evolution of a fish pathogen.</title>
        <authorList>
            <person name="Reith M.E."/>
            <person name="Singh R.K."/>
            <person name="Curtis B."/>
            <person name="Boyd J.M."/>
            <person name="Bouevitch A."/>
            <person name="Kimball J."/>
            <person name="Munholland J."/>
            <person name="Murphy C."/>
            <person name="Sarty D."/>
            <person name="Williams J."/>
            <person name="Nash J.H."/>
            <person name="Johnson S.C."/>
            <person name="Brown L.L."/>
        </authorList>
    </citation>
    <scope>NUCLEOTIDE SEQUENCE [LARGE SCALE GENOMIC DNA]</scope>
    <source>
        <strain>A449</strain>
    </source>
</reference>
<organism>
    <name type="scientific">Aeromonas salmonicida (strain A449)</name>
    <dbReference type="NCBI Taxonomy" id="382245"/>
    <lineage>
        <taxon>Bacteria</taxon>
        <taxon>Pseudomonadati</taxon>
        <taxon>Pseudomonadota</taxon>
        <taxon>Gammaproteobacteria</taxon>
        <taxon>Aeromonadales</taxon>
        <taxon>Aeromonadaceae</taxon>
        <taxon>Aeromonas</taxon>
    </lineage>
</organism>
<evidence type="ECO:0000255" key="1">
    <source>
        <dbReference type="HAMAP-Rule" id="MF_00473"/>
    </source>
</evidence>
<protein>
    <recommendedName>
        <fullName evidence="1">Glucose-6-phosphate isomerase</fullName>
        <shortName evidence="1">GPI</shortName>
        <ecNumber evidence="1">5.3.1.9</ecNumber>
    </recommendedName>
    <alternativeName>
        <fullName evidence="1">Phosphoglucose isomerase</fullName>
        <shortName evidence="1">PGI</shortName>
    </alternativeName>
    <alternativeName>
        <fullName evidence="1">Phosphohexose isomerase</fullName>
        <shortName evidence="1">PHI</shortName>
    </alternativeName>
</protein>
<sequence>MKNINPTQTQAWQALEAHFAANKETRLKDLFAQDPKRFDKFSLTFGGDILVDYSKNLITEETLKLLVDLAKETDLRSAIDAMFNGEKINMTEGRSVLHVALRNRSDRPIECDGKDVMPEVNAVLAKMKGFCEKIISGEWKGYTGKAIQHVVNIGIGGSDLGPVMITEALRPYKNHLQMHFVSNVDGTHIAETLKEIDAETTLFLVASKTFTTQETMTNALTARDWFIKIAGDKAHVAKHFAALSTNGKAVAEFGIDTDNMFEFWDWVGGRYSSWSAIGMPIALSVGFDNFEALLQGAFEMDMHFATASYEQNVPVLLALIGLWYNNFHGAESEAILPYDQYMHRFPAYFQQGNMESNGKYVDRNGNPVDHQTGPIIWGEPGTNGQHAFYQLIHQGTKLIPCDFLAPAISHNPIGDHHPKLLANFFAQTEALAFGKSKEQVEAEFLAAGKTLEQVEDLVPFKVFEGNRPTNSILFKSLTPKTLGALIAMYEHKIFVQGAIWNIFSFDQWGVELGKQLANKILPELNTAEAVTSHDCSTNGLINTWKAWKA</sequence>
<name>G6PI_AERS4</name>
<keyword id="KW-0963">Cytoplasm</keyword>
<keyword id="KW-0312">Gluconeogenesis</keyword>
<keyword id="KW-0324">Glycolysis</keyword>
<keyword id="KW-0413">Isomerase</keyword>
<gene>
    <name evidence="1" type="primary">pgi</name>
    <name type="ordered locus">ASA_4235</name>
</gene>
<feature type="chain" id="PRO_1000013938" description="Glucose-6-phosphate isomerase">
    <location>
        <begin position="1"/>
        <end position="549"/>
    </location>
</feature>
<feature type="active site" description="Proton donor" evidence="1">
    <location>
        <position position="355"/>
    </location>
</feature>
<feature type="active site" evidence="1">
    <location>
        <position position="386"/>
    </location>
</feature>
<feature type="active site" evidence="1">
    <location>
        <position position="514"/>
    </location>
</feature>
<dbReference type="EC" id="5.3.1.9" evidence="1"/>
<dbReference type="EMBL" id="CP000644">
    <property type="protein sequence ID" value="ABO92163.1"/>
    <property type="molecule type" value="Genomic_DNA"/>
</dbReference>
<dbReference type="RefSeq" id="WP_005321299.1">
    <property type="nucleotide sequence ID" value="NC_009348.1"/>
</dbReference>
<dbReference type="SMR" id="A4STE1"/>
<dbReference type="STRING" id="29491.GCA_000820065_04494"/>
<dbReference type="KEGG" id="asa:ASA_4235"/>
<dbReference type="eggNOG" id="COG0166">
    <property type="taxonomic scope" value="Bacteria"/>
</dbReference>
<dbReference type="HOGENOM" id="CLU_017947_3_1_6"/>
<dbReference type="UniPathway" id="UPA00109">
    <property type="reaction ID" value="UER00181"/>
</dbReference>
<dbReference type="UniPathway" id="UPA00138"/>
<dbReference type="Proteomes" id="UP000000225">
    <property type="component" value="Chromosome"/>
</dbReference>
<dbReference type="GO" id="GO:0005829">
    <property type="term" value="C:cytosol"/>
    <property type="evidence" value="ECO:0007669"/>
    <property type="project" value="TreeGrafter"/>
</dbReference>
<dbReference type="GO" id="GO:0097367">
    <property type="term" value="F:carbohydrate derivative binding"/>
    <property type="evidence" value="ECO:0007669"/>
    <property type="project" value="InterPro"/>
</dbReference>
<dbReference type="GO" id="GO:0004347">
    <property type="term" value="F:glucose-6-phosphate isomerase activity"/>
    <property type="evidence" value="ECO:0007669"/>
    <property type="project" value="UniProtKB-UniRule"/>
</dbReference>
<dbReference type="GO" id="GO:0048029">
    <property type="term" value="F:monosaccharide binding"/>
    <property type="evidence" value="ECO:0007669"/>
    <property type="project" value="TreeGrafter"/>
</dbReference>
<dbReference type="GO" id="GO:0006094">
    <property type="term" value="P:gluconeogenesis"/>
    <property type="evidence" value="ECO:0007669"/>
    <property type="project" value="UniProtKB-UniRule"/>
</dbReference>
<dbReference type="GO" id="GO:0051156">
    <property type="term" value="P:glucose 6-phosphate metabolic process"/>
    <property type="evidence" value="ECO:0007669"/>
    <property type="project" value="TreeGrafter"/>
</dbReference>
<dbReference type="GO" id="GO:0006096">
    <property type="term" value="P:glycolytic process"/>
    <property type="evidence" value="ECO:0007669"/>
    <property type="project" value="UniProtKB-UniRule"/>
</dbReference>
<dbReference type="CDD" id="cd05015">
    <property type="entry name" value="SIS_PGI_1"/>
    <property type="match status" value="1"/>
</dbReference>
<dbReference type="CDD" id="cd05016">
    <property type="entry name" value="SIS_PGI_2"/>
    <property type="match status" value="1"/>
</dbReference>
<dbReference type="FunFam" id="1.10.1390.10:FF:000001">
    <property type="entry name" value="Glucose-6-phosphate isomerase"/>
    <property type="match status" value="1"/>
</dbReference>
<dbReference type="FunFam" id="3.40.50.10490:FF:000004">
    <property type="entry name" value="Glucose-6-phosphate isomerase"/>
    <property type="match status" value="1"/>
</dbReference>
<dbReference type="Gene3D" id="1.10.1390.10">
    <property type="match status" value="1"/>
</dbReference>
<dbReference type="Gene3D" id="3.40.50.10490">
    <property type="entry name" value="Glucose-6-phosphate isomerase like protein, domain 1"/>
    <property type="match status" value="2"/>
</dbReference>
<dbReference type="HAMAP" id="MF_00473">
    <property type="entry name" value="G6P_isomerase"/>
    <property type="match status" value="1"/>
</dbReference>
<dbReference type="InterPro" id="IPR001672">
    <property type="entry name" value="G6P_Isomerase"/>
</dbReference>
<dbReference type="InterPro" id="IPR023096">
    <property type="entry name" value="G6P_Isomerase_C"/>
</dbReference>
<dbReference type="InterPro" id="IPR018189">
    <property type="entry name" value="Phosphoglucose_isomerase_CS"/>
</dbReference>
<dbReference type="InterPro" id="IPR046348">
    <property type="entry name" value="SIS_dom_sf"/>
</dbReference>
<dbReference type="InterPro" id="IPR035476">
    <property type="entry name" value="SIS_PGI_1"/>
</dbReference>
<dbReference type="InterPro" id="IPR035482">
    <property type="entry name" value="SIS_PGI_2"/>
</dbReference>
<dbReference type="NCBIfam" id="NF001211">
    <property type="entry name" value="PRK00179.1"/>
    <property type="match status" value="1"/>
</dbReference>
<dbReference type="PANTHER" id="PTHR11469">
    <property type="entry name" value="GLUCOSE-6-PHOSPHATE ISOMERASE"/>
    <property type="match status" value="1"/>
</dbReference>
<dbReference type="PANTHER" id="PTHR11469:SF1">
    <property type="entry name" value="GLUCOSE-6-PHOSPHATE ISOMERASE"/>
    <property type="match status" value="1"/>
</dbReference>
<dbReference type="Pfam" id="PF00342">
    <property type="entry name" value="PGI"/>
    <property type="match status" value="1"/>
</dbReference>
<dbReference type="PRINTS" id="PR00662">
    <property type="entry name" value="G6PISOMERASE"/>
</dbReference>
<dbReference type="SUPFAM" id="SSF53697">
    <property type="entry name" value="SIS domain"/>
    <property type="match status" value="1"/>
</dbReference>
<dbReference type="PROSITE" id="PS00765">
    <property type="entry name" value="P_GLUCOSE_ISOMERASE_1"/>
    <property type="match status" value="1"/>
</dbReference>
<dbReference type="PROSITE" id="PS00174">
    <property type="entry name" value="P_GLUCOSE_ISOMERASE_2"/>
    <property type="match status" value="1"/>
</dbReference>
<dbReference type="PROSITE" id="PS51463">
    <property type="entry name" value="P_GLUCOSE_ISOMERASE_3"/>
    <property type="match status" value="1"/>
</dbReference>